<sequence>MKVRASVKKICRNCKIVKRSGVVRVICVEPKHKQRQG</sequence>
<accession>B8CNF4</accession>
<protein>
    <recommendedName>
        <fullName evidence="1">Large ribosomal subunit protein bL36</fullName>
    </recommendedName>
    <alternativeName>
        <fullName evidence="2">50S ribosomal protein L36</fullName>
    </alternativeName>
</protein>
<dbReference type="EMBL" id="CP000472">
    <property type="protein sequence ID" value="ACJ28788.1"/>
    <property type="molecule type" value="Genomic_DNA"/>
</dbReference>
<dbReference type="RefSeq" id="WP_006083579.1">
    <property type="nucleotide sequence ID" value="NC_011566.1"/>
</dbReference>
<dbReference type="SMR" id="B8CNF4"/>
<dbReference type="STRING" id="225849.swp_2032"/>
<dbReference type="GeneID" id="94726207"/>
<dbReference type="KEGG" id="swp:swp_2032"/>
<dbReference type="eggNOG" id="COG0257">
    <property type="taxonomic scope" value="Bacteria"/>
</dbReference>
<dbReference type="HOGENOM" id="CLU_135723_6_2_6"/>
<dbReference type="OrthoDB" id="9802520at2"/>
<dbReference type="Proteomes" id="UP000000753">
    <property type="component" value="Chromosome"/>
</dbReference>
<dbReference type="GO" id="GO:0005737">
    <property type="term" value="C:cytoplasm"/>
    <property type="evidence" value="ECO:0007669"/>
    <property type="project" value="UniProtKB-ARBA"/>
</dbReference>
<dbReference type="GO" id="GO:1990904">
    <property type="term" value="C:ribonucleoprotein complex"/>
    <property type="evidence" value="ECO:0007669"/>
    <property type="project" value="UniProtKB-KW"/>
</dbReference>
<dbReference type="GO" id="GO:0005840">
    <property type="term" value="C:ribosome"/>
    <property type="evidence" value="ECO:0007669"/>
    <property type="project" value="UniProtKB-KW"/>
</dbReference>
<dbReference type="GO" id="GO:0003735">
    <property type="term" value="F:structural constituent of ribosome"/>
    <property type="evidence" value="ECO:0007669"/>
    <property type="project" value="InterPro"/>
</dbReference>
<dbReference type="GO" id="GO:0006412">
    <property type="term" value="P:translation"/>
    <property type="evidence" value="ECO:0007669"/>
    <property type="project" value="UniProtKB-UniRule"/>
</dbReference>
<dbReference type="HAMAP" id="MF_00251">
    <property type="entry name" value="Ribosomal_bL36"/>
    <property type="match status" value="1"/>
</dbReference>
<dbReference type="InterPro" id="IPR000473">
    <property type="entry name" value="Ribosomal_bL36"/>
</dbReference>
<dbReference type="InterPro" id="IPR035977">
    <property type="entry name" value="Ribosomal_bL36_sp"/>
</dbReference>
<dbReference type="NCBIfam" id="TIGR01022">
    <property type="entry name" value="rpmJ_bact"/>
    <property type="match status" value="1"/>
</dbReference>
<dbReference type="PANTHER" id="PTHR42888">
    <property type="entry name" value="50S RIBOSOMAL PROTEIN L36, CHLOROPLASTIC"/>
    <property type="match status" value="1"/>
</dbReference>
<dbReference type="PANTHER" id="PTHR42888:SF1">
    <property type="entry name" value="LARGE RIBOSOMAL SUBUNIT PROTEIN BL36C"/>
    <property type="match status" value="1"/>
</dbReference>
<dbReference type="Pfam" id="PF00444">
    <property type="entry name" value="Ribosomal_L36"/>
    <property type="match status" value="1"/>
</dbReference>
<dbReference type="SUPFAM" id="SSF57840">
    <property type="entry name" value="Ribosomal protein L36"/>
    <property type="match status" value="1"/>
</dbReference>
<dbReference type="PROSITE" id="PS00828">
    <property type="entry name" value="RIBOSOMAL_L36"/>
    <property type="match status" value="1"/>
</dbReference>
<gene>
    <name evidence="1" type="primary">rpmJ</name>
    <name type="ordered locus">swp_2032</name>
</gene>
<reference key="1">
    <citation type="journal article" date="2008" name="PLoS ONE">
        <title>Environmental adaptation: genomic analysis of the piezotolerant and psychrotolerant deep-sea iron reducing bacterium Shewanella piezotolerans WP3.</title>
        <authorList>
            <person name="Wang F."/>
            <person name="Wang J."/>
            <person name="Jian H."/>
            <person name="Zhang B."/>
            <person name="Li S."/>
            <person name="Wang F."/>
            <person name="Zeng X."/>
            <person name="Gao L."/>
            <person name="Bartlett D.H."/>
            <person name="Yu J."/>
            <person name="Hu S."/>
            <person name="Xiao X."/>
        </authorList>
    </citation>
    <scope>NUCLEOTIDE SEQUENCE [LARGE SCALE GENOMIC DNA]</scope>
    <source>
        <strain>WP3 / JCM 13877</strain>
    </source>
</reference>
<proteinExistence type="inferred from homology"/>
<comment type="similarity">
    <text evidence="1">Belongs to the bacterial ribosomal protein bL36 family.</text>
</comment>
<feature type="chain" id="PRO_1000196208" description="Large ribosomal subunit protein bL36">
    <location>
        <begin position="1"/>
        <end position="37"/>
    </location>
</feature>
<organism>
    <name type="scientific">Shewanella piezotolerans (strain WP3 / JCM 13877)</name>
    <dbReference type="NCBI Taxonomy" id="225849"/>
    <lineage>
        <taxon>Bacteria</taxon>
        <taxon>Pseudomonadati</taxon>
        <taxon>Pseudomonadota</taxon>
        <taxon>Gammaproteobacteria</taxon>
        <taxon>Alteromonadales</taxon>
        <taxon>Shewanellaceae</taxon>
        <taxon>Shewanella</taxon>
    </lineage>
</organism>
<evidence type="ECO:0000255" key="1">
    <source>
        <dbReference type="HAMAP-Rule" id="MF_00251"/>
    </source>
</evidence>
<evidence type="ECO:0000305" key="2"/>
<name>RL36_SHEPW</name>
<keyword id="KW-0687">Ribonucleoprotein</keyword>
<keyword id="KW-0689">Ribosomal protein</keyword>